<dbReference type="EMBL" id="Z49431">
    <property type="status" value="NOT_ANNOTATED_CDS"/>
    <property type="molecule type" value="Genomic_DNA"/>
</dbReference>
<dbReference type="EMBL" id="Z49432">
    <property type="status" value="NOT_ANNOTATED_CDS"/>
    <property type="molecule type" value="Genomic_DNA"/>
</dbReference>
<dbReference type="SMR" id="P0C5N9"/>
<dbReference type="PaxDb" id="4932-YJL156W-A"/>
<dbReference type="EnsemblFungi" id="YJL156W-A_mRNA">
    <property type="protein sequence ID" value="YJL156W-A"/>
    <property type="gene ID" value="YJL156W-A"/>
</dbReference>
<dbReference type="AGR" id="SGD:S000007613"/>
<dbReference type="SGD" id="S000007613">
    <property type="gene designation" value="YJL156W-A"/>
</dbReference>
<dbReference type="HOGENOM" id="CLU_2706682_0_0_1"/>
<dbReference type="GO" id="GO:0016020">
    <property type="term" value="C:membrane"/>
    <property type="evidence" value="ECO:0007669"/>
    <property type="project" value="UniProtKB-SubCell"/>
</dbReference>
<keyword id="KW-0472">Membrane</keyword>
<keyword id="KW-0812">Transmembrane</keyword>
<keyword id="KW-1133">Transmembrane helix</keyword>
<name>YJ156_YEAST</name>
<proteinExistence type="uncertain"/>
<reference key="1">
    <citation type="journal article" date="1996" name="EMBO J.">
        <title>Complete nucleotide sequence of Saccharomyces cerevisiae chromosome X.</title>
        <authorList>
            <person name="Galibert F."/>
            <person name="Alexandraki D."/>
            <person name="Baur A."/>
            <person name="Boles E."/>
            <person name="Chalwatzis N."/>
            <person name="Chuat J.-C."/>
            <person name="Coster F."/>
            <person name="Cziepluch C."/>
            <person name="de Haan M."/>
            <person name="Domdey H."/>
            <person name="Durand P."/>
            <person name="Entian K.-D."/>
            <person name="Gatius M."/>
            <person name="Goffeau A."/>
            <person name="Grivell L.A."/>
            <person name="Hennemann A."/>
            <person name="Herbert C.J."/>
            <person name="Heumann K."/>
            <person name="Hilger F."/>
            <person name="Hollenberg C.P."/>
            <person name="Huang M.-E."/>
            <person name="Jacq C."/>
            <person name="Jauniaux J.-C."/>
            <person name="Katsoulou C."/>
            <person name="Kirchrath L."/>
            <person name="Kleine K."/>
            <person name="Kordes E."/>
            <person name="Koetter P."/>
            <person name="Liebl S."/>
            <person name="Louis E.J."/>
            <person name="Manus V."/>
            <person name="Mewes H.-W."/>
            <person name="Miosga T."/>
            <person name="Obermaier B."/>
            <person name="Perea J."/>
            <person name="Pohl T.M."/>
            <person name="Portetelle D."/>
            <person name="Pujol A."/>
            <person name="Purnelle B."/>
            <person name="Ramezani Rad M."/>
            <person name="Rasmussen S.W."/>
            <person name="Rose M."/>
            <person name="Rossau R."/>
            <person name="Schaaff-Gerstenschlaeger I."/>
            <person name="Smits P.H.M."/>
            <person name="Scarcez T."/>
            <person name="Soriano N."/>
            <person name="To Van D."/>
            <person name="Tzermia M."/>
            <person name="Van Broekhoven A."/>
            <person name="Vandenbol M."/>
            <person name="Wedler H."/>
            <person name="von Wettstein D."/>
            <person name="Wambutt R."/>
            <person name="Zagulski M."/>
            <person name="Zollner A."/>
            <person name="Karpfinger-Hartl L."/>
        </authorList>
    </citation>
    <scope>NUCLEOTIDE SEQUENCE [LARGE SCALE GENOMIC DNA]</scope>
    <source>
        <strain>ATCC 204508 / S288c</strain>
    </source>
</reference>
<reference key="2">
    <citation type="journal article" date="2014" name="G3 (Bethesda)">
        <title>The reference genome sequence of Saccharomyces cerevisiae: Then and now.</title>
        <authorList>
            <person name="Engel S.R."/>
            <person name="Dietrich F.S."/>
            <person name="Fisk D.G."/>
            <person name="Binkley G."/>
            <person name="Balakrishnan R."/>
            <person name="Costanzo M.C."/>
            <person name="Dwight S.S."/>
            <person name="Hitz B.C."/>
            <person name="Karra K."/>
            <person name="Nash R.S."/>
            <person name="Weng S."/>
            <person name="Wong E.D."/>
            <person name="Lloyd P."/>
            <person name="Skrzypek M.S."/>
            <person name="Miyasato S.R."/>
            <person name="Simison M."/>
            <person name="Cherry J.M."/>
        </authorList>
    </citation>
    <scope>GENOME REANNOTATION</scope>
    <source>
        <strain>ATCC 204508 / S288c</strain>
    </source>
</reference>
<reference key="3">
    <citation type="journal article" date="2000" name="FEBS Lett.">
        <title>Genomic exploration of the hemiascomycetous yeasts: 4. The genome of Saccharomyces cerevisiae revisited.</title>
        <authorList>
            <person name="Blandin G."/>
            <person name="Durrens P."/>
            <person name="Tekaia F."/>
            <person name="Aigle M."/>
            <person name="Bolotin-Fukuhara M."/>
            <person name="Bon E."/>
            <person name="Casaregola S."/>
            <person name="de Montigny J."/>
            <person name="Gaillardin C."/>
            <person name="Lepingle A."/>
            <person name="Llorente B."/>
            <person name="Malpertuy A."/>
            <person name="Neuveglise C."/>
            <person name="Ozier-Kalogeropoulos O."/>
            <person name="Perrin A."/>
            <person name="Potier S."/>
            <person name="Souciet J.-L."/>
            <person name="Talla E."/>
            <person name="Toffano-Nioche C."/>
            <person name="Wesolowski-Louvel M."/>
            <person name="Marck C."/>
            <person name="Dujon B."/>
        </authorList>
    </citation>
    <scope>GENOME REANNOTATION</scope>
</reference>
<organism>
    <name type="scientific">Saccharomyces cerevisiae (strain ATCC 204508 / S288c)</name>
    <name type="common">Baker's yeast</name>
    <dbReference type="NCBI Taxonomy" id="559292"/>
    <lineage>
        <taxon>Eukaryota</taxon>
        <taxon>Fungi</taxon>
        <taxon>Dikarya</taxon>
        <taxon>Ascomycota</taxon>
        <taxon>Saccharomycotina</taxon>
        <taxon>Saccharomycetes</taxon>
        <taxon>Saccharomycetales</taxon>
        <taxon>Saccharomycetaceae</taxon>
        <taxon>Saccharomyces</taxon>
    </lineage>
</organism>
<protein>
    <recommendedName>
        <fullName>Putative uncharacterized protein YJL156W-A</fullName>
    </recommendedName>
</protein>
<feature type="chain" id="PRO_0000309037" description="Putative uncharacterized protein YJL156W-A">
    <location>
        <begin position="1"/>
        <end position="73"/>
    </location>
</feature>
<feature type="transmembrane region" description="Helical" evidence="1">
    <location>
        <begin position="54"/>
        <end position="72"/>
    </location>
</feature>
<sequence length="73" mass="8426">MLKIASLKKKDMQTKESCILKRPGLSCPPNKTKEVNESKQIFFLTWKNKATMKVSFIVAPTVMQVQCLFFFIL</sequence>
<evidence type="ECO:0000255" key="1"/>
<evidence type="ECO:0000305" key="2"/>
<evidence type="ECO:0000305" key="3">
    <source>
    </source>
</evidence>
<accession>P0C5N9</accession>
<gene>
    <name type="ordered locus">YJL156W-A</name>
</gene>
<comment type="subcellular location">
    <subcellularLocation>
        <location evidence="2">Membrane</location>
        <topology evidence="2">Single-pass membrane protein</topology>
    </subcellularLocation>
</comment>
<comment type="caution">
    <text evidence="3">Product of a dubious gene prediction unlikely to encode a functional protein. Because of that it is not part of the S.cerevisiae S288c complete/reference proteome set.</text>
</comment>